<comment type="function">
    <text evidence="2 4">Dermonecrotic toxins cleave the phosphodiester linkage between the phosphate and headgroup of certain phospholipids (sphingolipid and lysolipid substrates), forming an alcohol (often choline) and a cyclic phosphate (By similarity). This toxin acts on sphingomyelin (SM) (By similarity). It may also act on ceramide phosphoethanolamine (CPE), lysophosphatidylcholine (LPC) and lysophosphatidylethanolamine (LPE), but not on lysophosphatidylserine (LPS), and lysophosphatidylglycerol (LPG) (By similarity). It acts by transphosphatidylation, releasing exclusively cyclic phosphate products as second products (By similarity). Induces dermonecrosis, hemolysis, increased vascular permeability, edema, inflammatory response, and platelet aggregation (By similarity).</text>
</comment>
<comment type="catalytic activity">
    <reaction evidence="2">
        <text>an N-(acyl)-sphingosylphosphocholine = an N-(acyl)-sphingosyl-1,3-cyclic phosphate + choline</text>
        <dbReference type="Rhea" id="RHEA:60652"/>
        <dbReference type="ChEBI" id="CHEBI:15354"/>
        <dbReference type="ChEBI" id="CHEBI:64583"/>
        <dbReference type="ChEBI" id="CHEBI:143892"/>
    </reaction>
</comment>
<comment type="catalytic activity">
    <reaction evidence="2">
        <text>an N-(acyl)-sphingosylphosphoethanolamine = an N-(acyl)-sphingosyl-1,3-cyclic phosphate + ethanolamine</text>
        <dbReference type="Rhea" id="RHEA:60648"/>
        <dbReference type="ChEBI" id="CHEBI:57603"/>
        <dbReference type="ChEBI" id="CHEBI:143891"/>
        <dbReference type="ChEBI" id="CHEBI:143892"/>
    </reaction>
</comment>
<comment type="catalytic activity">
    <reaction evidence="2">
        <text>a 1-acyl-sn-glycero-3-phosphocholine = a 1-acyl-sn-glycero-2,3-cyclic phosphate + choline</text>
        <dbReference type="Rhea" id="RHEA:60700"/>
        <dbReference type="ChEBI" id="CHEBI:15354"/>
        <dbReference type="ChEBI" id="CHEBI:58168"/>
        <dbReference type="ChEBI" id="CHEBI:143947"/>
    </reaction>
</comment>
<comment type="catalytic activity">
    <reaction evidence="2">
        <text>a 1-acyl-sn-glycero-3-phosphoethanolamine = a 1-acyl-sn-glycero-2,3-cyclic phosphate + ethanolamine</text>
        <dbReference type="Rhea" id="RHEA:60704"/>
        <dbReference type="ChEBI" id="CHEBI:57603"/>
        <dbReference type="ChEBI" id="CHEBI:64381"/>
        <dbReference type="ChEBI" id="CHEBI:143947"/>
    </reaction>
</comment>
<comment type="cofactor">
    <cofactor evidence="6">
        <name>Mg(2+)</name>
        <dbReference type="ChEBI" id="CHEBI:18420"/>
    </cofactor>
    <text evidence="6">Binds 1 Mg(2+) ion per subunit.</text>
</comment>
<comment type="subcellular location">
    <subcellularLocation>
        <location evidence="9">Secreted</location>
    </subcellularLocation>
</comment>
<comment type="tissue specificity">
    <text evidence="9">Expressed by the venom gland.</text>
</comment>
<comment type="similarity">
    <text evidence="8">Belongs to the arthropod phospholipase D family. Class II subfamily.</text>
</comment>
<comment type="caution">
    <text evidence="2 3 5">The most common activity assay for dermonecrotic toxins detects enzymatic activity by monitoring choline release from substrate. Liberation of choline from sphingomyelin (SM) or lysophosphatidylcholine (LPC) is commonly assumed to result from substrate hydrolysis, giving either ceramide-1-phosphate (C1P) or lysophosphatidic acid (LPA), respectively, as a second product. However, two studies from Lajoie and colleagues (2013 and 2015) report the observation of exclusive formation of cyclic phosphate products as second products, resulting from intramolecular transphosphatidylation. Cyclic phosphates have vastly different biological properties from their monoester counterparts, and they may be relevant to the pathology of brown spider envenomation.</text>
</comment>
<name>A1IA3_LOXIN</name>
<reference key="1">
    <citation type="journal article" date="2007" name="Toxicon">
        <title>The Loxtox protein family in Loxosceles intermedia (Mello-Leitao) venom.</title>
        <authorList>
            <person name="Kalapothakis E."/>
            <person name="Chatzaki M."/>
            <person name="Goncalves-Dornelas H."/>
            <person name="de Castro C.S."/>
            <person name="Silvestre F.G."/>
            <person name="Laborne F.V."/>
            <person name="de Moura J.F."/>
            <person name="Veiga S.S."/>
            <person name="Chavez-Olortegui C."/>
            <person name="Granier C."/>
            <person name="Barbaro K.C."/>
        </authorList>
    </citation>
    <scope>NUCLEOTIDE SEQUENCE [MRNA]</scope>
    <source>
        <tissue>Venom gland</tissue>
    </source>
</reference>
<dbReference type="EC" id="4.6.1.-" evidence="5"/>
<dbReference type="EMBL" id="EF535252">
    <property type="protein sequence ID" value="ABU43331.1"/>
    <property type="molecule type" value="mRNA"/>
</dbReference>
<dbReference type="SMR" id="B2KKV8"/>
<dbReference type="ArachnoServer" id="AS000490">
    <property type="toxin name" value="Sphingomyelinase D (LiSicTox-alphaIA2aiii)"/>
</dbReference>
<dbReference type="GO" id="GO:0005576">
    <property type="term" value="C:extracellular region"/>
    <property type="evidence" value="ECO:0007669"/>
    <property type="project" value="UniProtKB-SubCell"/>
</dbReference>
<dbReference type="GO" id="GO:0016829">
    <property type="term" value="F:lyase activity"/>
    <property type="evidence" value="ECO:0007669"/>
    <property type="project" value="UniProtKB-KW"/>
</dbReference>
<dbReference type="GO" id="GO:0046872">
    <property type="term" value="F:metal ion binding"/>
    <property type="evidence" value="ECO:0007669"/>
    <property type="project" value="UniProtKB-KW"/>
</dbReference>
<dbReference type="GO" id="GO:0008081">
    <property type="term" value="F:phosphoric diester hydrolase activity"/>
    <property type="evidence" value="ECO:0007669"/>
    <property type="project" value="InterPro"/>
</dbReference>
<dbReference type="GO" id="GO:0090729">
    <property type="term" value="F:toxin activity"/>
    <property type="evidence" value="ECO:0007669"/>
    <property type="project" value="UniProtKB-KW"/>
</dbReference>
<dbReference type="GO" id="GO:0031640">
    <property type="term" value="P:killing of cells of another organism"/>
    <property type="evidence" value="ECO:0007669"/>
    <property type="project" value="UniProtKB-KW"/>
</dbReference>
<dbReference type="GO" id="GO:0016042">
    <property type="term" value="P:lipid catabolic process"/>
    <property type="evidence" value="ECO:0007669"/>
    <property type="project" value="UniProtKB-KW"/>
</dbReference>
<dbReference type="CDD" id="cd08576">
    <property type="entry name" value="GDPD_like_SMaseD_PLD"/>
    <property type="match status" value="1"/>
</dbReference>
<dbReference type="Gene3D" id="3.20.20.190">
    <property type="entry name" value="Phosphatidylinositol (PI) phosphodiesterase"/>
    <property type="match status" value="1"/>
</dbReference>
<dbReference type="InterPro" id="IPR017946">
    <property type="entry name" value="PLC-like_Pdiesterase_TIM-brl"/>
</dbReference>
<dbReference type="Pfam" id="PF13653">
    <property type="entry name" value="GDPD_2"/>
    <property type="match status" value="1"/>
</dbReference>
<dbReference type="SUPFAM" id="SSF51695">
    <property type="entry name" value="PLC-like phosphodiesterases"/>
    <property type="match status" value="1"/>
</dbReference>
<proteinExistence type="evidence at transcript level"/>
<sequence length="305" mass="34105">LPYIALILVCWSVLSQAAQTDVEERADKRRPIWIMGHMVNAIAQIDEFVNLGANSIETDVSFDDNANPEYTYHGIPCDCGRSCLKWENFNDFLKGLRSATTPGNAKYQAKLILVVFDLKTGSLYDNQANEAGKKLAKNLLKHYWNNGNNGGRAYIVLSIPDLNHYPLIKGFKDQLTQDGHPELMDKVGHDFSGNDAIGDVGNAYKKAGISGHVWQSDGITNCLLRGLDRVKQAIANRDSAKGFINKVYYWTVDKRATTRDALDAGVDGVMTNYPDVITDVLNESAYKNKFRVASYEDNPWETFKK</sequence>
<keyword id="KW-0204">Cytolysis</keyword>
<keyword id="KW-1061">Dermonecrotic toxin</keyword>
<keyword id="KW-1015">Disulfide bond</keyword>
<keyword id="KW-0325">Glycoprotein</keyword>
<keyword id="KW-0354">Hemolysis</keyword>
<keyword id="KW-0442">Lipid degradation</keyword>
<keyword id="KW-0443">Lipid metabolism</keyword>
<keyword id="KW-0456">Lyase</keyword>
<keyword id="KW-0460">Magnesium</keyword>
<keyword id="KW-0479">Metal-binding</keyword>
<keyword id="KW-0964">Secreted</keyword>
<keyword id="KW-0732">Signal</keyword>
<keyword id="KW-0800">Toxin</keyword>
<keyword id="KW-0865">Zymogen</keyword>
<accession>B2KKV8</accession>
<feature type="signal peptide" evidence="7">
    <location>
        <begin position="1" status="less than"/>
        <end position="17"/>
    </location>
</feature>
<feature type="propeptide" id="PRO_0000380637" evidence="1">
    <location>
        <begin position="18"/>
        <end position="25"/>
    </location>
</feature>
<feature type="chain" id="PRO_0000380638" description="Dermonecrotic toxin LiSicTox-alphaIA2aiii">
    <location>
        <begin position="26"/>
        <end position="305"/>
    </location>
</feature>
<feature type="active site" evidence="6">
    <location>
        <position position="37"/>
    </location>
</feature>
<feature type="active site" description="Nucleophile" evidence="6">
    <location>
        <position position="73"/>
    </location>
</feature>
<feature type="binding site" evidence="6">
    <location>
        <position position="57"/>
    </location>
    <ligand>
        <name>Mg(2+)</name>
        <dbReference type="ChEBI" id="CHEBI:18420"/>
    </ligand>
</feature>
<feature type="binding site" evidence="6">
    <location>
        <position position="59"/>
    </location>
    <ligand>
        <name>Mg(2+)</name>
        <dbReference type="ChEBI" id="CHEBI:18420"/>
    </ligand>
</feature>
<feature type="binding site" evidence="6">
    <location>
        <position position="117"/>
    </location>
    <ligand>
        <name>Mg(2+)</name>
        <dbReference type="ChEBI" id="CHEBI:18420"/>
    </ligand>
</feature>
<feature type="glycosylation site" description="N-linked (GlcNAc...) asparagine" evidence="7">
    <location>
        <position position="282"/>
    </location>
</feature>
<feature type="disulfide bond" evidence="4">
    <location>
        <begin position="77"/>
        <end position="83"/>
    </location>
</feature>
<feature type="disulfide bond" evidence="4">
    <location>
        <begin position="79"/>
        <end position="222"/>
    </location>
</feature>
<feature type="non-terminal residue">
    <location>
        <position position="1"/>
    </location>
</feature>
<evidence type="ECO:0000250" key="1"/>
<evidence type="ECO:0000250" key="2">
    <source>
        <dbReference type="UniProtKB" id="A0A0D4WTV1"/>
    </source>
</evidence>
<evidence type="ECO:0000250" key="3">
    <source>
        <dbReference type="UniProtKB" id="A0A0D4WV12"/>
    </source>
</evidence>
<evidence type="ECO:0000250" key="4">
    <source>
        <dbReference type="UniProtKB" id="P0CE80"/>
    </source>
</evidence>
<evidence type="ECO:0000250" key="5">
    <source>
        <dbReference type="UniProtKB" id="Q4ZFU2"/>
    </source>
</evidence>
<evidence type="ECO:0000250" key="6">
    <source>
        <dbReference type="UniProtKB" id="Q8I914"/>
    </source>
</evidence>
<evidence type="ECO:0000255" key="7"/>
<evidence type="ECO:0000305" key="8"/>
<evidence type="ECO:0000305" key="9">
    <source>
    </source>
</evidence>
<organism>
    <name type="scientific">Loxosceles intermedia</name>
    <name type="common">Brown spider</name>
    <dbReference type="NCBI Taxonomy" id="58218"/>
    <lineage>
        <taxon>Eukaryota</taxon>
        <taxon>Metazoa</taxon>
        <taxon>Ecdysozoa</taxon>
        <taxon>Arthropoda</taxon>
        <taxon>Chelicerata</taxon>
        <taxon>Arachnida</taxon>
        <taxon>Araneae</taxon>
        <taxon>Araneomorphae</taxon>
        <taxon>Haplogynae</taxon>
        <taxon>Scytodoidea</taxon>
        <taxon>Sicariidae</taxon>
        <taxon>Loxosceles</taxon>
    </lineage>
</organism>
<protein>
    <recommendedName>
        <fullName>Dermonecrotic toxin LiSicTox-alphaIA2aiii</fullName>
        <ecNumber evidence="5">4.6.1.-</ecNumber>
    </recommendedName>
    <alternativeName>
        <fullName>Loxtox i3</fullName>
    </alternativeName>
    <alternativeName>
        <fullName>Phospholipase D</fullName>
        <shortName>PLD</shortName>
    </alternativeName>
    <alternativeName>
        <fullName>Sphingomyelin phosphodiesterase D</fullName>
        <shortName>SMD</shortName>
        <shortName>SMase D</shortName>
        <shortName>Sphingomyelinase D</shortName>
    </alternativeName>
</protein>